<reference key="1">
    <citation type="journal article" date="2009" name="PLoS Genet.">
        <title>Organised genome dynamics in the Escherichia coli species results in highly diverse adaptive paths.</title>
        <authorList>
            <person name="Touchon M."/>
            <person name="Hoede C."/>
            <person name="Tenaillon O."/>
            <person name="Barbe V."/>
            <person name="Baeriswyl S."/>
            <person name="Bidet P."/>
            <person name="Bingen E."/>
            <person name="Bonacorsi S."/>
            <person name="Bouchier C."/>
            <person name="Bouvet O."/>
            <person name="Calteau A."/>
            <person name="Chiapello H."/>
            <person name="Clermont O."/>
            <person name="Cruveiller S."/>
            <person name="Danchin A."/>
            <person name="Diard M."/>
            <person name="Dossat C."/>
            <person name="Karoui M.E."/>
            <person name="Frapy E."/>
            <person name="Garry L."/>
            <person name="Ghigo J.M."/>
            <person name="Gilles A.M."/>
            <person name="Johnson J."/>
            <person name="Le Bouguenec C."/>
            <person name="Lescat M."/>
            <person name="Mangenot S."/>
            <person name="Martinez-Jehanne V."/>
            <person name="Matic I."/>
            <person name="Nassif X."/>
            <person name="Oztas S."/>
            <person name="Petit M.A."/>
            <person name="Pichon C."/>
            <person name="Rouy Z."/>
            <person name="Ruf C.S."/>
            <person name="Schneider D."/>
            <person name="Tourret J."/>
            <person name="Vacherie B."/>
            <person name="Vallenet D."/>
            <person name="Medigue C."/>
            <person name="Rocha E.P.C."/>
            <person name="Denamur E."/>
        </authorList>
    </citation>
    <scope>NUCLEOTIDE SEQUENCE [LARGE SCALE GENOMIC DNA]</scope>
    <source>
        <strain>55989 / EAEC</strain>
    </source>
</reference>
<organism>
    <name type="scientific">Escherichia coli (strain 55989 / EAEC)</name>
    <dbReference type="NCBI Taxonomy" id="585055"/>
    <lineage>
        <taxon>Bacteria</taxon>
        <taxon>Pseudomonadati</taxon>
        <taxon>Pseudomonadota</taxon>
        <taxon>Gammaproteobacteria</taxon>
        <taxon>Enterobacterales</taxon>
        <taxon>Enterobacteriaceae</taxon>
        <taxon>Escherichia</taxon>
    </lineage>
</organism>
<name>YIDD_ECO55</name>
<protein>
    <recommendedName>
        <fullName evidence="1">Putative membrane protein insertion efficiency factor</fullName>
    </recommendedName>
</protein>
<dbReference type="EMBL" id="CU928145">
    <property type="protein sequence ID" value="CAV00762.1"/>
    <property type="molecule type" value="Genomic_DNA"/>
</dbReference>
<dbReference type="RefSeq" id="WP_001307474.1">
    <property type="nucleotide sequence ID" value="NZ_CP028304.1"/>
</dbReference>
<dbReference type="GeneID" id="97443257"/>
<dbReference type="KEGG" id="eck:EC55989_4175"/>
<dbReference type="HOGENOM" id="CLU_144811_5_2_6"/>
<dbReference type="Proteomes" id="UP000000746">
    <property type="component" value="Chromosome"/>
</dbReference>
<dbReference type="GO" id="GO:0005886">
    <property type="term" value="C:plasma membrane"/>
    <property type="evidence" value="ECO:0007669"/>
    <property type="project" value="UniProtKB-SubCell"/>
</dbReference>
<dbReference type="HAMAP" id="MF_00386">
    <property type="entry name" value="UPF0161_YidD"/>
    <property type="match status" value="1"/>
</dbReference>
<dbReference type="InterPro" id="IPR002696">
    <property type="entry name" value="Membr_insert_effic_factor_YidD"/>
</dbReference>
<dbReference type="NCBIfam" id="TIGR00278">
    <property type="entry name" value="membrane protein insertion efficiency factor YidD"/>
    <property type="match status" value="1"/>
</dbReference>
<dbReference type="PANTHER" id="PTHR33383">
    <property type="entry name" value="MEMBRANE PROTEIN INSERTION EFFICIENCY FACTOR-RELATED"/>
    <property type="match status" value="1"/>
</dbReference>
<dbReference type="PANTHER" id="PTHR33383:SF1">
    <property type="entry name" value="MEMBRANE PROTEIN INSERTION EFFICIENCY FACTOR-RELATED"/>
    <property type="match status" value="1"/>
</dbReference>
<dbReference type="Pfam" id="PF01809">
    <property type="entry name" value="YidD"/>
    <property type="match status" value="1"/>
</dbReference>
<dbReference type="SMART" id="SM01234">
    <property type="entry name" value="Haemolytic"/>
    <property type="match status" value="1"/>
</dbReference>
<gene>
    <name evidence="1" type="primary">yidD</name>
    <name type="ordered locus">EC55989_4175</name>
</gene>
<comment type="function">
    <text evidence="1">Could be involved in insertion of integral membrane proteins into the membrane.</text>
</comment>
<comment type="subcellular location">
    <subcellularLocation>
        <location evidence="1">Cell inner membrane</location>
        <topology evidence="1">Peripheral membrane protein</topology>
        <orientation evidence="1">Cytoplasmic side</orientation>
    </subcellularLocation>
</comment>
<comment type="similarity">
    <text evidence="1">Belongs to the UPF0161 family.</text>
</comment>
<keyword id="KW-0997">Cell inner membrane</keyword>
<keyword id="KW-1003">Cell membrane</keyword>
<keyword id="KW-0472">Membrane</keyword>
<keyword id="KW-1185">Reference proteome</keyword>
<proteinExistence type="inferred from homology"/>
<evidence type="ECO:0000255" key="1">
    <source>
        <dbReference type="HAMAP-Rule" id="MF_00386"/>
    </source>
</evidence>
<accession>B7L848</accession>
<feature type="chain" id="PRO_1000197751" description="Putative membrane protein insertion efficiency factor">
    <location>
        <begin position="1"/>
        <end position="85"/>
    </location>
</feature>
<sequence>MAPPLSPGSRVLIALIRVYQRLISPLLGPHCRFTPTCSSYGIEALRRFGVIKGSWLTVKRVLKCHPLHPGGDDPVPPGPFDTREH</sequence>